<proteinExistence type="evidence at protein level"/>
<name>DISP1_MOUSE</name>
<reference key="1">
    <citation type="journal article" date="2002" name="Cell">
        <title>Hedgehog-mediated patterning of the mammalian embryo requires transporter-like function of dispatched.</title>
        <authorList>
            <person name="Ma Y."/>
            <person name="Erkner A."/>
            <person name="Gong R."/>
            <person name="Yao S."/>
            <person name="Taipale J."/>
            <person name="Basler K."/>
            <person name="Beachy P.A."/>
        </authorList>
    </citation>
    <scope>NUCLEOTIDE SEQUENCE [MRNA] (ISOFORM 1)</scope>
    <scope>FUNCTION</scope>
    <scope>DEVELOPMENTAL STAGE</scope>
    <scope>MUTAGENESIS OF 571-ASP-ASP-572 AND ASP-1049</scope>
    <source>
        <strain>129</strain>
        <tissue>Testis</tissue>
    </source>
</reference>
<reference key="2">
    <citation type="journal article" date="2002" name="Development">
        <title>Mouse dispatched mutants fail to distribute hedgehog proteins and are defective in hedgehog signaling.</title>
        <authorList>
            <person name="Kawakami T."/>
            <person name="Kawcak T."/>
            <person name="Li Y.-J."/>
            <person name="Zhang W."/>
            <person name="Hu Y."/>
            <person name="Chuang P.-T."/>
        </authorList>
    </citation>
    <scope>NUCLEOTIDE SEQUENCE [MRNA] (ISOFORM 1)</scope>
    <scope>FUNCTION</scope>
    <scope>DEVELOPMENTAL STAGE</scope>
    <scope>DISRUPTION PHENOTYPE</scope>
    <source>
        <strain>Swiss Webster</strain>
        <tissue>Embryo</tissue>
    </source>
</reference>
<reference key="3">
    <citation type="journal article" date="2005" name="Science">
        <title>The transcriptional landscape of the mammalian genome.</title>
        <authorList>
            <person name="Carninci P."/>
            <person name="Kasukawa T."/>
            <person name="Katayama S."/>
            <person name="Gough J."/>
            <person name="Frith M.C."/>
            <person name="Maeda N."/>
            <person name="Oyama R."/>
            <person name="Ravasi T."/>
            <person name="Lenhard B."/>
            <person name="Wells C."/>
            <person name="Kodzius R."/>
            <person name="Shimokawa K."/>
            <person name="Bajic V.B."/>
            <person name="Brenner S.E."/>
            <person name="Batalov S."/>
            <person name="Forrest A.R."/>
            <person name="Zavolan M."/>
            <person name="Davis M.J."/>
            <person name="Wilming L.G."/>
            <person name="Aidinis V."/>
            <person name="Allen J.E."/>
            <person name="Ambesi-Impiombato A."/>
            <person name="Apweiler R."/>
            <person name="Aturaliya R.N."/>
            <person name="Bailey T.L."/>
            <person name="Bansal M."/>
            <person name="Baxter L."/>
            <person name="Beisel K.W."/>
            <person name="Bersano T."/>
            <person name="Bono H."/>
            <person name="Chalk A.M."/>
            <person name="Chiu K.P."/>
            <person name="Choudhary V."/>
            <person name="Christoffels A."/>
            <person name="Clutterbuck D.R."/>
            <person name="Crowe M.L."/>
            <person name="Dalla E."/>
            <person name="Dalrymple B.P."/>
            <person name="de Bono B."/>
            <person name="Della Gatta G."/>
            <person name="di Bernardo D."/>
            <person name="Down T."/>
            <person name="Engstrom P."/>
            <person name="Fagiolini M."/>
            <person name="Faulkner G."/>
            <person name="Fletcher C.F."/>
            <person name="Fukushima T."/>
            <person name="Furuno M."/>
            <person name="Futaki S."/>
            <person name="Gariboldi M."/>
            <person name="Georgii-Hemming P."/>
            <person name="Gingeras T.R."/>
            <person name="Gojobori T."/>
            <person name="Green R.E."/>
            <person name="Gustincich S."/>
            <person name="Harbers M."/>
            <person name="Hayashi Y."/>
            <person name="Hensch T.K."/>
            <person name="Hirokawa N."/>
            <person name="Hill D."/>
            <person name="Huminiecki L."/>
            <person name="Iacono M."/>
            <person name="Ikeo K."/>
            <person name="Iwama A."/>
            <person name="Ishikawa T."/>
            <person name="Jakt M."/>
            <person name="Kanapin A."/>
            <person name="Katoh M."/>
            <person name="Kawasawa Y."/>
            <person name="Kelso J."/>
            <person name="Kitamura H."/>
            <person name="Kitano H."/>
            <person name="Kollias G."/>
            <person name="Krishnan S.P."/>
            <person name="Kruger A."/>
            <person name="Kummerfeld S.K."/>
            <person name="Kurochkin I.V."/>
            <person name="Lareau L.F."/>
            <person name="Lazarevic D."/>
            <person name="Lipovich L."/>
            <person name="Liu J."/>
            <person name="Liuni S."/>
            <person name="McWilliam S."/>
            <person name="Madan Babu M."/>
            <person name="Madera M."/>
            <person name="Marchionni L."/>
            <person name="Matsuda H."/>
            <person name="Matsuzawa S."/>
            <person name="Miki H."/>
            <person name="Mignone F."/>
            <person name="Miyake S."/>
            <person name="Morris K."/>
            <person name="Mottagui-Tabar S."/>
            <person name="Mulder N."/>
            <person name="Nakano N."/>
            <person name="Nakauchi H."/>
            <person name="Ng P."/>
            <person name="Nilsson R."/>
            <person name="Nishiguchi S."/>
            <person name="Nishikawa S."/>
            <person name="Nori F."/>
            <person name="Ohara O."/>
            <person name="Okazaki Y."/>
            <person name="Orlando V."/>
            <person name="Pang K.C."/>
            <person name="Pavan W.J."/>
            <person name="Pavesi G."/>
            <person name="Pesole G."/>
            <person name="Petrovsky N."/>
            <person name="Piazza S."/>
            <person name="Reed J."/>
            <person name="Reid J.F."/>
            <person name="Ring B.Z."/>
            <person name="Ringwald M."/>
            <person name="Rost B."/>
            <person name="Ruan Y."/>
            <person name="Salzberg S.L."/>
            <person name="Sandelin A."/>
            <person name="Schneider C."/>
            <person name="Schoenbach C."/>
            <person name="Sekiguchi K."/>
            <person name="Semple C.A."/>
            <person name="Seno S."/>
            <person name="Sessa L."/>
            <person name="Sheng Y."/>
            <person name="Shibata Y."/>
            <person name="Shimada H."/>
            <person name="Shimada K."/>
            <person name="Silva D."/>
            <person name="Sinclair B."/>
            <person name="Sperling S."/>
            <person name="Stupka E."/>
            <person name="Sugiura K."/>
            <person name="Sultana R."/>
            <person name="Takenaka Y."/>
            <person name="Taki K."/>
            <person name="Tammoja K."/>
            <person name="Tan S.L."/>
            <person name="Tang S."/>
            <person name="Taylor M.S."/>
            <person name="Tegner J."/>
            <person name="Teichmann S.A."/>
            <person name="Ueda H.R."/>
            <person name="van Nimwegen E."/>
            <person name="Verardo R."/>
            <person name="Wei C.L."/>
            <person name="Yagi K."/>
            <person name="Yamanishi H."/>
            <person name="Zabarovsky E."/>
            <person name="Zhu S."/>
            <person name="Zimmer A."/>
            <person name="Hide W."/>
            <person name="Bult C."/>
            <person name="Grimmond S.M."/>
            <person name="Teasdale R.D."/>
            <person name="Liu E.T."/>
            <person name="Brusic V."/>
            <person name="Quackenbush J."/>
            <person name="Wahlestedt C."/>
            <person name="Mattick J.S."/>
            <person name="Hume D.A."/>
            <person name="Kai C."/>
            <person name="Sasaki D."/>
            <person name="Tomaru Y."/>
            <person name="Fukuda S."/>
            <person name="Kanamori-Katayama M."/>
            <person name="Suzuki M."/>
            <person name="Aoki J."/>
            <person name="Arakawa T."/>
            <person name="Iida J."/>
            <person name="Imamura K."/>
            <person name="Itoh M."/>
            <person name="Kato T."/>
            <person name="Kawaji H."/>
            <person name="Kawagashira N."/>
            <person name="Kawashima T."/>
            <person name="Kojima M."/>
            <person name="Kondo S."/>
            <person name="Konno H."/>
            <person name="Nakano K."/>
            <person name="Ninomiya N."/>
            <person name="Nishio T."/>
            <person name="Okada M."/>
            <person name="Plessy C."/>
            <person name="Shibata K."/>
            <person name="Shiraki T."/>
            <person name="Suzuki S."/>
            <person name="Tagami M."/>
            <person name="Waki K."/>
            <person name="Watahiki A."/>
            <person name="Okamura-Oho Y."/>
            <person name="Suzuki H."/>
            <person name="Kawai J."/>
            <person name="Hayashizaki Y."/>
        </authorList>
    </citation>
    <scope>NUCLEOTIDE SEQUENCE [LARGE SCALE MRNA] (ISOFORMS 1 AND 2)</scope>
    <source>
        <strain>C57BL/6J</strain>
        <strain>NOD</strain>
        <tissue>Dendritic cell</tissue>
        <tissue>Embryo</tissue>
        <tissue>Hypothalamus</tissue>
    </source>
</reference>
<reference key="4">
    <citation type="journal article" date="2004" name="Genome Res.">
        <title>The status, quality, and expansion of the NIH full-length cDNA project: the Mammalian Gene Collection (MGC).</title>
        <authorList>
            <consortium name="The MGC Project Team"/>
        </authorList>
    </citation>
    <scope>NUCLEOTIDE SEQUENCE [LARGE SCALE MRNA] (ISOFORM 1)</scope>
    <source>
        <strain>C57BL/6J</strain>
        <tissue>Brain</tissue>
    </source>
</reference>
<reference key="5">
    <citation type="journal article" date="2002" name="Curr. Biol.">
        <title>Mouse Dispatched homolog1 is required for long-range, but not juxtacrine, Hh signaling.</title>
        <authorList>
            <person name="Caspary T."/>
            <person name="Garcia-Garcia M.J."/>
            <person name="Huangfu D."/>
            <person name="Eggenschwiler J.T."/>
            <person name="Wyler M.R."/>
            <person name="Rakeman A.S."/>
            <person name="Alcorn H.L."/>
            <person name="Anderson K.V."/>
        </authorList>
    </citation>
    <scope>NUCLEOTIDE SEQUENCE [MRNA] OF 1-1501 (ISOFORM 1)</scope>
    <scope>FUNCTION</scope>
    <scope>MUTAGENESIS OF CYS-829</scope>
    <scope>DEVELOPMENTAL STAGE</scope>
    <source>
        <strain>C57BL/6J</strain>
    </source>
</reference>
<reference key="6">
    <citation type="journal article" date="2012" name="Cell Rep.">
        <title>Dispatched and scube mediate the efficient secretion of the cholesterol-modified hedgehog ligand.</title>
        <authorList>
            <person name="Tukachinsky H."/>
            <person name="Kuzmickas R.P."/>
            <person name="Jao C.Y."/>
            <person name="Liu J."/>
            <person name="Salic A."/>
        </authorList>
    </citation>
    <scope>FUNCTION</scope>
    <scope>INTERACTION WITH SHH</scope>
</reference>
<protein>
    <recommendedName>
        <fullName>Protein dispatched homolog 1</fullName>
    </recommendedName>
    <alternativeName>
        <fullName>Mdispa</fullName>
    </alternativeName>
</protein>
<comment type="function">
    <text evidence="4 5 6 7">Functions in hedgehog (Hh) signaling. Regulates the release and extracellular accumulation of cholesterol-modified hedgehog proteins and is hence required for effective production of the Hh signal. Synergizes with SCUBE2 to cause an increase in SHH secretion (PubMed:22902404).</text>
</comment>
<comment type="subunit">
    <text evidence="7">Interacts with SHH; via the cholesterol anchor of the dually lipid-modified SHH (ShhNp) (PubMed:22902404).</text>
</comment>
<comment type="subcellular location">
    <subcellularLocation>
        <location evidence="9">Membrane</location>
        <topology evidence="9">Multi-pass membrane protein</topology>
    </subcellularLocation>
</comment>
<comment type="alternative products">
    <event type="alternative splicing"/>
    <isoform>
        <id>Q3TDN0-1</id>
        <name>1</name>
        <sequence type="displayed"/>
    </isoform>
    <isoform>
        <id>Q3TDN0-2</id>
        <name>2</name>
        <sequence type="described" ref="VSP_029322 VSP_029323"/>
    </isoform>
</comment>
<comment type="developmental stage">
    <text evidence="4 5 6">Expression overlaps with the one of SHH and IHH being restricted to tissues that require Hh signaling. PubMed:12372301, reported a more ubiquitous expression which is detected throughout the embryo at 7.5 dpc and is maintained during embryonic development.</text>
</comment>
<comment type="disruption phenotype">
    <text evidence="6">Death at or soon after 9.5 dpc probably due to abnormal embryonic turning and looping of the heart. Embryos also display defects in development of the forebrain and branchial arches.</text>
</comment>
<comment type="similarity">
    <text evidence="9">Belongs to the dispatched family.</text>
</comment>
<dbReference type="EMBL" id="AY150698">
    <property type="protein sequence ID" value="AAN52161.1"/>
    <property type="molecule type" value="mRNA"/>
</dbReference>
<dbReference type="EMBL" id="AY150577">
    <property type="protein sequence ID" value="AAN64660.1"/>
    <property type="molecule type" value="mRNA"/>
</dbReference>
<dbReference type="EMBL" id="AK004521">
    <property type="protein sequence ID" value="BAB23344.1"/>
    <property type="molecule type" value="mRNA"/>
</dbReference>
<dbReference type="EMBL" id="AK138276">
    <property type="protein sequence ID" value="BAE23607.1"/>
    <property type="molecule type" value="mRNA"/>
</dbReference>
<dbReference type="EMBL" id="AK170113">
    <property type="protein sequence ID" value="BAE41571.1"/>
    <property type="molecule type" value="mRNA"/>
</dbReference>
<dbReference type="EMBL" id="BC043102">
    <property type="protein sequence ID" value="AAH43102.1"/>
    <property type="molecule type" value="mRNA"/>
</dbReference>
<dbReference type="EMBL" id="BC059225">
    <property type="protein sequence ID" value="AAH59225.1"/>
    <property type="molecule type" value="mRNA"/>
</dbReference>
<dbReference type="EMBL" id="AY144589">
    <property type="protein sequence ID" value="AAN08631.1"/>
    <property type="molecule type" value="mRNA"/>
</dbReference>
<dbReference type="CCDS" id="CCDS56661.1">
    <molecule id="Q3TDN0-1"/>
</dbReference>
<dbReference type="RefSeq" id="NP_001265147.1">
    <molecule id="Q3TDN0-1"/>
    <property type="nucleotide sequence ID" value="NM_001278218.1"/>
</dbReference>
<dbReference type="RefSeq" id="NP_001265148.1">
    <molecule id="Q3TDN0-1"/>
    <property type="nucleotide sequence ID" value="NM_001278219.1"/>
</dbReference>
<dbReference type="RefSeq" id="NP_001265149.1">
    <molecule id="Q3TDN0-1"/>
    <property type="nucleotide sequence ID" value="NM_001278220.1"/>
</dbReference>
<dbReference type="RefSeq" id="NP_081142.3">
    <molecule id="Q3TDN0-1"/>
    <property type="nucleotide sequence ID" value="NM_026866.3"/>
</dbReference>
<dbReference type="RefSeq" id="XP_036009287.1">
    <molecule id="Q3TDN0-1"/>
    <property type="nucleotide sequence ID" value="XM_036153394.1"/>
</dbReference>
<dbReference type="PDB" id="7RPH">
    <property type="method" value="EM"/>
    <property type="resolution" value="2.50 A"/>
    <property type="chains" value="A=172-1521"/>
</dbReference>
<dbReference type="PDB" id="7RPI">
    <property type="method" value="EM"/>
    <property type="resolution" value="2.50 A"/>
    <property type="chains" value="A=172-1521"/>
</dbReference>
<dbReference type="PDB" id="7RPJ">
    <property type="method" value="EM"/>
    <property type="resolution" value="3.20 A"/>
    <property type="chains" value="A=172-1521"/>
</dbReference>
<dbReference type="PDB" id="7RPK">
    <property type="method" value="EM"/>
    <property type="resolution" value="2.70 A"/>
    <property type="chains" value="A=172-1521"/>
</dbReference>
<dbReference type="PDBsum" id="7RPH"/>
<dbReference type="PDBsum" id="7RPI"/>
<dbReference type="PDBsum" id="7RPJ"/>
<dbReference type="PDBsum" id="7RPK"/>
<dbReference type="EMDB" id="EMD-24614"/>
<dbReference type="EMDB" id="EMD-24615"/>
<dbReference type="EMDB" id="EMD-24616"/>
<dbReference type="EMDB" id="EMD-24617"/>
<dbReference type="SMR" id="Q3TDN0"/>
<dbReference type="CORUM" id="Q3TDN0"/>
<dbReference type="FunCoup" id="Q3TDN0">
    <property type="interactions" value="463"/>
</dbReference>
<dbReference type="STRING" id="10090.ENSMUSP00000003035"/>
<dbReference type="TCDB" id="2.A.6.9.2">
    <property type="family name" value="the resistance-nodulation-cell division (rnd) superfamily"/>
</dbReference>
<dbReference type="GlyCosmos" id="Q3TDN0">
    <property type="glycosylation" value="5 sites, No reported glycans"/>
</dbReference>
<dbReference type="GlyGen" id="Q3TDN0">
    <property type="glycosylation" value="7 sites, 2 N-linked glycans (2 sites)"/>
</dbReference>
<dbReference type="iPTMnet" id="Q3TDN0"/>
<dbReference type="PhosphoSitePlus" id="Q3TDN0"/>
<dbReference type="jPOST" id="Q3TDN0"/>
<dbReference type="PaxDb" id="10090-ENSMUSP00000003035"/>
<dbReference type="ProteomicsDB" id="279774">
    <molecule id="Q3TDN0-1"/>
</dbReference>
<dbReference type="ProteomicsDB" id="279775">
    <molecule id="Q3TDN0-2"/>
</dbReference>
<dbReference type="Antibodypedia" id="34633">
    <property type="antibodies" value="142 antibodies from 31 providers"/>
</dbReference>
<dbReference type="Ensembl" id="ENSMUST00000003035.12">
    <molecule id="Q3TDN0-1"/>
    <property type="protein sequence ID" value="ENSMUSP00000003035.6"/>
    <property type="gene ID" value="ENSMUSG00000030768.13"/>
</dbReference>
<dbReference type="Ensembl" id="ENSMUST00000171366.7">
    <molecule id="Q3TDN0-1"/>
    <property type="protein sequence ID" value="ENSMUSP00000126742.2"/>
    <property type="gene ID" value="ENSMUSG00000030768.13"/>
</dbReference>
<dbReference type="Ensembl" id="ENSMUST00000195372.2">
    <molecule id="Q3TDN0-1"/>
    <property type="protein sequence ID" value="ENSMUSP00000141747.2"/>
    <property type="gene ID" value="ENSMUSG00000030768.13"/>
</dbReference>
<dbReference type="GeneID" id="68897"/>
<dbReference type="KEGG" id="mmu:68897"/>
<dbReference type="UCSC" id="uc008ick.2">
    <molecule id="Q3TDN0-1"/>
    <property type="organism name" value="mouse"/>
</dbReference>
<dbReference type="UCSC" id="uc008ico.2">
    <molecule id="Q3TDN0-2"/>
    <property type="organism name" value="mouse"/>
</dbReference>
<dbReference type="AGR" id="MGI:1916147"/>
<dbReference type="CTD" id="84976"/>
<dbReference type="MGI" id="MGI:1916147">
    <property type="gene designation" value="Disp1"/>
</dbReference>
<dbReference type="VEuPathDB" id="HostDB:ENSMUSG00000030768"/>
<dbReference type="eggNOG" id="KOG3664">
    <property type="taxonomic scope" value="Eukaryota"/>
</dbReference>
<dbReference type="GeneTree" id="ENSGT00940000157407"/>
<dbReference type="HOGENOM" id="CLU_004076_1_0_1"/>
<dbReference type="InParanoid" id="Q3TDN0"/>
<dbReference type="OMA" id="NGLLAMC"/>
<dbReference type="OrthoDB" id="193905at2759"/>
<dbReference type="PhylomeDB" id="Q3TDN0"/>
<dbReference type="TreeFam" id="TF324144"/>
<dbReference type="BioGRID-ORCS" id="68897">
    <property type="hits" value="0 hits in 77 CRISPR screens"/>
</dbReference>
<dbReference type="ChiTaRS" id="Disp1">
    <property type="organism name" value="mouse"/>
</dbReference>
<dbReference type="PRO" id="PR:Q3TDN0"/>
<dbReference type="Proteomes" id="UP000000589">
    <property type="component" value="Chromosome 1"/>
</dbReference>
<dbReference type="RNAct" id="Q3TDN0">
    <property type="molecule type" value="protein"/>
</dbReference>
<dbReference type="Bgee" id="ENSMUSG00000030768">
    <property type="expression patterns" value="Expressed in humerus cartilage element and 175 other cell types or tissues"/>
</dbReference>
<dbReference type="ExpressionAtlas" id="Q3TDN0">
    <property type="expression patterns" value="baseline and differential"/>
</dbReference>
<dbReference type="GO" id="GO:0016020">
    <property type="term" value="C:membrane"/>
    <property type="evidence" value="ECO:0007669"/>
    <property type="project" value="UniProtKB-SubCell"/>
</dbReference>
<dbReference type="GO" id="GO:0140104">
    <property type="term" value="F:molecular carrier activity"/>
    <property type="evidence" value="ECO:0000314"/>
    <property type="project" value="MGI"/>
</dbReference>
<dbReference type="GO" id="GO:0007368">
    <property type="term" value="P:determination of left/right symmetry"/>
    <property type="evidence" value="ECO:0000315"/>
    <property type="project" value="MGI"/>
</dbReference>
<dbReference type="GO" id="GO:0060539">
    <property type="term" value="P:diaphragm development"/>
    <property type="evidence" value="ECO:0007669"/>
    <property type="project" value="Ensembl"/>
</dbReference>
<dbReference type="GO" id="GO:0009953">
    <property type="term" value="P:dorsal/ventral pattern formation"/>
    <property type="evidence" value="ECO:0000315"/>
    <property type="project" value="MGI"/>
</dbReference>
<dbReference type="GO" id="GO:0009880">
    <property type="term" value="P:embryonic pattern specification"/>
    <property type="evidence" value="ECO:0000315"/>
    <property type="project" value="MGI"/>
</dbReference>
<dbReference type="GO" id="GO:0007225">
    <property type="term" value="P:patched ligand maturation"/>
    <property type="evidence" value="ECO:0000314"/>
    <property type="project" value="MGI"/>
</dbReference>
<dbReference type="GO" id="GO:0015833">
    <property type="term" value="P:peptide transport"/>
    <property type="evidence" value="ECO:0000314"/>
    <property type="project" value="MGI"/>
</dbReference>
<dbReference type="FunFam" id="1.20.1640.10:FF:000009">
    <property type="entry name" value="Dispatched homolog 1 (Drosophila)"/>
    <property type="match status" value="1"/>
</dbReference>
<dbReference type="FunFam" id="1.20.1640.10:FF:000011">
    <property type="entry name" value="Dispatched RND transporter family member 1"/>
    <property type="match status" value="1"/>
</dbReference>
<dbReference type="Gene3D" id="1.20.1640.10">
    <property type="entry name" value="Multidrug efflux transporter AcrB transmembrane domain"/>
    <property type="match status" value="2"/>
</dbReference>
<dbReference type="InterPro" id="IPR052081">
    <property type="entry name" value="Dispatched_Hh_regulator"/>
</dbReference>
<dbReference type="InterPro" id="IPR053958">
    <property type="entry name" value="HMGCR/SNAP/NPC1-like_SSD"/>
</dbReference>
<dbReference type="InterPro" id="IPR004869">
    <property type="entry name" value="MMPL_dom"/>
</dbReference>
<dbReference type="InterPro" id="IPR000731">
    <property type="entry name" value="SSD"/>
</dbReference>
<dbReference type="PANTHER" id="PTHR45951:SF4">
    <property type="entry name" value="PROTEIN DISPATCHED HOMOLOG 1"/>
    <property type="match status" value="1"/>
</dbReference>
<dbReference type="PANTHER" id="PTHR45951">
    <property type="entry name" value="PROTEIN DISPATCHED-RELATED"/>
    <property type="match status" value="1"/>
</dbReference>
<dbReference type="Pfam" id="PF03176">
    <property type="entry name" value="MMPL"/>
    <property type="match status" value="1"/>
</dbReference>
<dbReference type="Pfam" id="PF12349">
    <property type="entry name" value="Sterol-sensing"/>
    <property type="match status" value="1"/>
</dbReference>
<dbReference type="SUPFAM" id="SSF82866">
    <property type="entry name" value="Multidrug efflux transporter AcrB transmembrane domain"/>
    <property type="match status" value="2"/>
</dbReference>
<dbReference type="PROSITE" id="PS50156">
    <property type="entry name" value="SSD"/>
    <property type="match status" value="1"/>
</dbReference>
<sequence>MAVISGSDSVLLSNGSISTSTSNPSPLSPSDGDLPAQHLGPRETPRTKASPNGCLQLNGTVKSSFLPLDNQRTPQTPTQCCHPCPYHHPVSSHSNHQECHPEAGLAASPALASCRMQPHSEYSASLCPNHSPVYQAAHCLQPSPSFCLHHPWPDHFQHQPVRQHLTIIRPSRPFKFPRSYAALLADWPVVVLGMCTLLIVVCALVGVLVPELPDFSDPLLGFEPRGTTIGQRLVTWNNMMRNTGYKATLANYPYKYAEEQARSHRDDRWSDDHHERERREVDWNFQKDSFFCDVPSDGYSRVVFASAGGETLWNLPAIKSMCDVDNSRIRSHPQFSDLCQRTTAVSCCPSWTLGNYIAILNNRSSCQKIVERDVSHTLKLLRTCAKHYQNGTLGPDCWDKAARRKDQLKCTNVPRKCTKYNAVYQILHYLVDKDFMTPKTADYAVPALKYSMLFSPTEKGESMMNIYLDNFENWNSSDGITTVTGIEFGIKHSLFQDYLLMDTVYPAIAIAIVLLIMCVYTKSMFITLMTMFAIISSLIVSYFLYRVVFNFEFFPFMNLTALIILVGIGADDAFVLCDVWNYTKFDKPRAETSEAVSVTLQHAALSMFVTSFTTAAAFYANYVSNITAIRCFGVYAGTAILVNYVLMVTWLPAVIVLHERYLLNIFTCFRKPQPQAYDKSCWAVLCQKCRRVLFAVSEASRIFFEKVLPCIVIKFRYLWLIWFLALTVGGAYIVCVNPKMKLPSLELSEFQVFRSSHPFERYDAEFKKLFMFERVHHGEELHMPITVIWGVSPEDSGDPLNPKSKGELTLDSTFNIASPASQAWILHFCQKLRNQTFFHQTEQQDFTSCFIETFKQWMENQDCDEPALYPCCSHCSFPYKQEVFELCIKKAIMELDRSTGYHLNNKTPGPRFDINDTIRAVVLEFQSTFLFTLAYEKMQQFYKEVDSWISHELSSAPEGLSRGWFVSNLEFYDLQDSLSDGTLIAMGLSVAVAFSVMLLTTWNIIISLYAIVSIAGTIFVTVGSLVLLGWELNVLESVTISVAVGLSVDFAVHYGVAYRLAPDPDREGKVIFSLSRMGSAIAMAALTTFVAGAMMMPSTVLAYTQLGTFMMLVMCVSWAFATFFFQCLCRCLGPQGTCGQIPFPTKLQCSPFSHTLSARPGDRGPSKTHAASAYSVDARGQKSQLEHEFYELQPLASHSCTSSEKTTYEEPHTCSEFFNGQAKNLRMPVPAAYSSELTKSPSSEPGSALLQSCLEQDTVCHFSLNPRCNCRDAYTHLQYGLPEIHCQQMGDSLCHKCASTAGGFVQIQSSVAPLKASHQAAEGLLHPAQHMLPPGMQNSRPRNFFLHSVQHFQAQENLGRTSTHSTDERLPRTAELSPPPSDSRSTESFQRACCHPENNQRRLCKSRDPGDTEGSGGTKSKVSGLPNQTDKEEKQVEPSLLQTDETVNSEHLNHNESNFTFSHLPGEAGCRSCPNSPQSCRSIMRSKCGTEDCQTPNLEANVPAVPTHSDLSGESLLIKTL</sequence>
<feature type="chain" id="PRO_0000310694" description="Protein dispatched homolog 1">
    <location>
        <begin position="1"/>
        <end position="1521"/>
    </location>
</feature>
<feature type="transmembrane region" description="Helical" evidence="1">
    <location>
        <begin position="189"/>
        <end position="209"/>
    </location>
</feature>
<feature type="transmembrane region" description="Helical" evidence="1">
    <location>
        <begin position="499"/>
        <end position="519"/>
    </location>
</feature>
<feature type="transmembrane region" description="Helical" evidence="1">
    <location>
        <begin position="524"/>
        <end position="544"/>
    </location>
</feature>
<feature type="transmembrane region" description="Helical" evidence="1">
    <location>
        <begin position="548"/>
        <end position="568"/>
    </location>
</feature>
<feature type="transmembrane region" description="Helical" evidence="1">
    <location>
        <begin position="603"/>
        <end position="623"/>
    </location>
</feature>
<feature type="transmembrane region" description="Helical" evidence="1">
    <location>
        <begin position="637"/>
        <end position="657"/>
    </location>
</feature>
<feature type="transmembrane region" description="Helical" evidence="1">
    <location>
        <begin position="717"/>
        <end position="737"/>
    </location>
</feature>
<feature type="transmembrane region" description="Helical" evidence="1">
    <location>
        <begin position="986"/>
        <end position="1006"/>
    </location>
</feature>
<feature type="transmembrane region" description="Helical" evidence="1">
    <location>
        <begin position="1008"/>
        <end position="1028"/>
    </location>
</feature>
<feature type="transmembrane region" description="Helical" evidence="1">
    <location>
        <begin position="1038"/>
        <end position="1058"/>
    </location>
</feature>
<feature type="transmembrane region" description="Helical" evidence="1">
    <location>
        <begin position="1081"/>
        <end position="1101"/>
    </location>
</feature>
<feature type="transmembrane region" description="Helical" evidence="1">
    <location>
        <begin position="1109"/>
        <end position="1129"/>
    </location>
</feature>
<feature type="domain" description="SSD" evidence="2">
    <location>
        <begin position="485"/>
        <end position="657"/>
    </location>
</feature>
<feature type="region of interest" description="Disordered" evidence="3">
    <location>
        <begin position="1"/>
        <end position="55"/>
    </location>
</feature>
<feature type="region of interest" description="Disordered" evidence="3">
    <location>
        <begin position="1355"/>
        <end position="1440"/>
    </location>
</feature>
<feature type="compositionally biased region" description="Polar residues" evidence="3">
    <location>
        <begin position="1"/>
        <end position="10"/>
    </location>
</feature>
<feature type="compositionally biased region" description="Low complexity" evidence="3">
    <location>
        <begin position="11"/>
        <end position="35"/>
    </location>
</feature>
<feature type="compositionally biased region" description="Polar residues" evidence="3">
    <location>
        <begin position="1355"/>
        <end position="1364"/>
    </location>
</feature>
<feature type="compositionally biased region" description="Polar residues" evidence="3">
    <location>
        <begin position="1418"/>
        <end position="1428"/>
    </location>
</feature>
<feature type="glycosylation site" description="N-linked (GlcNAc...) asparagine" evidence="1">
    <location>
        <position position="14"/>
    </location>
</feature>
<feature type="glycosylation site" description="N-linked (GlcNAc...) asparagine" evidence="1">
    <location>
        <position position="58"/>
    </location>
</feature>
<feature type="glycosylation site" description="N-linked (GlcNAc...) asparagine" evidence="1">
    <location>
        <position position="390"/>
    </location>
</feature>
<feature type="glycosylation site" description="N-linked (GlcNAc...) asparagine" evidence="1">
    <location>
        <position position="581"/>
    </location>
</feature>
<feature type="glycosylation site" description="N-linked (GlcNAc...) asparagine" evidence="1">
    <location>
        <position position="1455"/>
    </location>
</feature>
<feature type="splice variant" id="VSP_029322" description="In isoform 2." evidence="8">
    <original>IRSHPQFSDLCQRTTAV</original>
    <variation>VCKTQLKSIQHNKVMLR</variation>
    <location>
        <begin position="329"/>
        <end position="345"/>
    </location>
</feature>
<feature type="splice variant" id="VSP_029323" description="In isoform 2." evidence="8">
    <location>
        <begin position="346"/>
        <end position="1521"/>
    </location>
</feature>
<feature type="mutagenesis site" description="Loss of function; when associated with A-1049." evidence="5">
    <original>DD</original>
    <variation>AA</variation>
    <location>
        <begin position="571"/>
        <end position="572"/>
    </location>
</feature>
<feature type="mutagenesis site" description="Loss of function; when associated with N-1049." evidence="5">
    <original>DD</original>
    <variation>NN</variation>
    <location>
        <begin position="571"/>
        <end position="572"/>
    </location>
</feature>
<feature type="mutagenesis site" description="In icb; loss of function." evidence="4">
    <original>C</original>
    <variation>F</variation>
    <location>
        <position position="829"/>
    </location>
</feature>
<feature type="mutagenesis site" description="Loss of function; when associated with 571-A-A-572." evidence="5">
    <original>D</original>
    <variation>A</variation>
    <location>
        <position position="1049"/>
    </location>
</feature>
<feature type="mutagenesis site" description="Loss of function; when associated with 571-N-N-572." evidence="5">
    <original>D</original>
    <variation>N</variation>
    <location>
        <position position="1049"/>
    </location>
</feature>
<feature type="sequence conflict" description="In Ref. 3; BAE23607." evidence="9" ref="3">
    <original>C</original>
    <variation>W</variation>
    <location>
        <position position="292"/>
    </location>
</feature>
<feature type="sequence conflict" description="In Ref. 1; AAN52161." evidence="9" ref="1">
    <original>K</original>
    <variation>M</variation>
    <location>
        <position position="688"/>
    </location>
</feature>
<feature type="sequence conflict" description="In Ref. 3; BAE23607." evidence="9" ref="3">
    <original>I</original>
    <variation>V</variation>
    <location>
        <position position="949"/>
    </location>
</feature>
<feature type="sequence conflict" description="In Ref. 1; AAN52161 and 2; AAN64660." evidence="9" ref="1 2">
    <original>S</original>
    <variation>N</variation>
    <location>
        <position position="1309"/>
    </location>
</feature>
<feature type="sequence conflict" description="In Ref. 1; AAN52161, 2; AAN64660 and 3; BAE41571." evidence="9" ref="1 2 3">
    <original>K</original>
    <variation>E</variation>
    <location>
        <position position="1431"/>
    </location>
</feature>
<feature type="helix" evidence="10">
    <location>
        <begin position="180"/>
        <end position="186"/>
    </location>
</feature>
<feature type="helix" evidence="10">
    <location>
        <begin position="188"/>
        <end position="208"/>
    </location>
</feature>
<feature type="turn" evidence="10">
    <location>
        <begin position="218"/>
        <end position="221"/>
    </location>
</feature>
<feature type="helix" evidence="10">
    <location>
        <begin position="228"/>
        <end position="241"/>
    </location>
</feature>
<feature type="strand" evidence="10">
    <location>
        <begin position="247"/>
        <end position="252"/>
    </location>
</feature>
<feature type="helix" evidence="10">
    <location>
        <begin position="254"/>
        <end position="261"/>
    </location>
</feature>
<feature type="helix" evidence="13">
    <location>
        <begin position="269"/>
        <end position="272"/>
    </location>
</feature>
<feature type="turn" evidence="10">
    <location>
        <begin position="285"/>
        <end position="288"/>
    </location>
</feature>
<feature type="strand" evidence="10">
    <location>
        <begin position="299"/>
        <end position="306"/>
    </location>
</feature>
<feature type="helix" evidence="10">
    <location>
        <begin position="315"/>
        <end position="328"/>
    </location>
</feature>
<feature type="turn" evidence="10">
    <location>
        <begin position="329"/>
        <end position="331"/>
    </location>
</feature>
<feature type="helix" evidence="10">
    <location>
        <begin position="335"/>
        <end position="338"/>
    </location>
</feature>
<feature type="strand" evidence="10">
    <location>
        <begin position="341"/>
        <end position="343"/>
    </location>
</feature>
<feature type="strand" evidence="11">
    <location>
        <begin position="344"/>
        <end position="346"/>
    </location>
</feature>
<feature type="helix" evidence="10">
    <location>
        <begin position="353"/>
        <end position="360"/>
    </location>
</feature>
<feature type="helix" evidence="10">
    <location>
        <begin position="366"/>
        <end position="368"/>
    </location>
</feature>
<feature type="helix" evidence="10">
    <location>
        <begin position="371"/>
        <end position="389"/>
    </location>
</feature>
<feature type="strand" evidence="12">
    <location>
        <begin position="391"/>
        <end position="393"/>
    </location>
</feature>
<feature type="helix" evidence="13">
    <location>
        <begin position="398"/>
        <end position="403"/>
    </location>
</feature>
<feature type="helix" evidence="10">
    <location>
        <begin position="415"/>
        <end position="418"/>
    </location>
</feature>
<feature type="helix" evidence="10">
    <location>
        <begin position="419"/>
        <end position="421"/>
    </location>
</feature>
<feature type="helix" evidence="10">
    <location>
        <begin position="422"/>
        <end position="429"/>
    </location>
</feature>
<feature type="strand" evidence="10">
    <location>
        <begin position="435"/>
        <end position="437"/>
    </location>
</feature>
<feature type="helix" evidence="10">
    <location>
        <begin position="438"/>
        <end position="441"/>
    </location>
</feature>
<feature type="strand" evidence="10">
    <location>
        <begin position="443"/>
        <end position="445"/>
    </location>
</feature>
<feature type="strand" evidence="10">
    <location>
        <begin position="450"/>
        <end position="460"/>
    </location>
</feature>
<feature type="helix" evidence="10">
    <location>
        <begin position="461"/>
        <end position="463"/>
    </location>
</feature>
<feature type="helix" evidence="10">
    <location>
        <begin position="464"/>
        <end position="470"/>
    </location>
</feature>
<feature type="turn" evidence="10">
    <location>
        <begin position="471"/>
        <end position="473"/>
    </location>
</feature>
<feature type="strand" evidence="10">
    <location>
        <begin position="479"/>
        <end position="489"/>
    </location>
</feature>
<feature type="helix" evidence="10">
    <location>
        <begin position="492"/>
        <end position="494"/>
    </location>
</feature>
<feature type="helix" evidence="10">
    <location>
        <begin position="495"/>
        <end position="501"/>
    </location>
</feature>
<feature type="helix" evidence="10">
    <location>
        <begin position="504"/>
        <end position="521"/>
    </location>
</feature>
<feature type="helix" evidence="10">
    <location>
        <begin position="524"/>
        <end position="547"/>
    </location>
</feature>
<feature type="helix" evidence="10">
    <location>
        <begin position="556"/>
        <end position="560"/>
    </location>
</feature>
<feature type="helix" evidence="10">
    <location>
        <begin position="561"/>
        <end position="568"/>
    </location>
</feature>
<feature type="helix" evidence="10">
    <location>
        <begin position="571"/>
        <end position="586"/>
    </location>
</feature>
<feature type="strand" evidence="12">
    <location>
        <begin position="587"/>
        <end position="589"/>
    </location>
</feature>
<feature type="helix" evidence="10">
    <location>
        <begin position="592"/>
        <end position="620"/>
    </location>
</feature>
<feature type="helix" evidence="10">
    <location>
        <begin position="621"/>
        <end position="623"/>
    </location>
</feature>
<feature type="strand" evidence="12">
    <location>
        <begin position="624"/>
        <end position="626"/>
    </location>
</feature>
<feature type="helix" evidence="10">
    <location>
        <begin position="627"/>
        <end position="647"/>
    </location>
</feature>
<feature type="helix" evidence="10">
    <location>
        <begin position="650"/>
        <end position="661"/>
    </location>
</feature>
<feature type="turn" evidence="10">
    <location>
        <begin position="662"/>
        <end position="664"/>
    </location>
</feature>
<feature type="helix" evidence="10">
    <location>
        <begin position="682"/>
        <end position="705"/>
    </location>
</feature>
<feature type="helix" evidence="10">
    <location>
        <begin position="707"/>
        <end position="714"/>
    </location>
</feature>
<feature type="helix" evidence="10">
    <location>
        <begin position="716"/>
        <end position="735"/>
    </location>
</feature>
<feature type="turn" evidence="12">
    <location>
        <begin position="736"/>
        <end position="738"/>
    </location>
</feature>
<feature type="helix" evidence="10">
    <location>
        <begin position="747"/>
        <end position="749"/>
    </location>
</feature>
<feature type="helix" evidence="10">
    <location>
        <begin position="758"/>
        <end position="764"/>
    </location>
</feature>
<feature type="helix" evidence="10">
    <location>
        <begin position="766"/>
        <end position="768"/>
    </location>
</feature>
<feature type="helix" evidence="10">
    <location>
        <begin position="771"/>
        <end position="778"/>
    </location>
</feature>
<feature type="strand" evidence="10">
    <location>
        <begin position="782"/>
        <end position="791"/>
    </location>
</feature>
<feature type="strand" evidence="10">
    <location>
        <begin position="816"/>
        <end position="818"/>
    </location>
</feature>
<feature type="helix" evidence="10">
    <location>
        <begin position="819"/>
        <end position="833"/>
    </location>
</feature>
<feature type="strand" evidence="10">
    <location>
        <begin position="846"/>
        <end position="849"/>
    </location>
</feature>
<feature type="helix" evidence="10">
    <location>
        <begin position="850"/>
        <end position="858"/>
    </location>
</feature>
<feature type="helix" evidence="10">
    <location>
        <begin position="866"/>
        <end position="871"/>
    </location>
</feature>
<feature type="helix" evidence="10">
    <location>
        <begin position="881"/>
        <end position="898"/>
    </location>
</feature>
<feature type="strand" evidence="10">
    <location>
        <begin position="909"/>
        <end position="912"/>
    </location>
</feature>
<feature type="strand" evidence="10">
    <location>
        <begin position="918"/>
        <end position="930"/>
    </location>
</feature>
<feature type="helix" evidence="10">
    <location>
        <begin position="935"/>
        <end position="953"/>
    </location>
</feature>
<feature type="turn" evidence="10">
    <location>
        <begin position="958"/>
        <end position="962"/>
    </location>
</feature>
<feature type="strand" evidence="10">
    <location>
        <begin position="964"/>
        <end position="966"/>
    </location>
</feature>
<feature type="helix" evidence="10">
    <location>
        <begin position="970"/>
        <end position="1001"/>
    </location>
</feature>
<feature type="helix" evidence="10">
    <location>
        <begin position="1004"/>
        <end position="1027"/>
    </location>
</feature>
<feature type="helix" evidence="10">
    <location>
        <begin position="1034"/>
        <end position="1060"/>
    </location>
</feature>
<feature type="helix" evidence="10">
    <location>
        <begin position="1066"/>
        <end position="1093"/>
    </location>
</feature>
<feature type="turn" evidence="10">
    <location>
        <begin position="1094"/>
        <end position="1097"/>
    </location>
</feature>
<feature type="helix" evidence="10">
    <location>
        <begin position="1101"/>
        <end position="1122"/>
    </location>
</feature>
<feature type="helix" evidence="10">
    <location>
        <begin position="1124"/>
        <end position="1132"/>
    </location>
</feature>
<feature type="turn" evidence="10">
    <location>
        <begin position="1136"/>
        <end position="1139"/>
    </location>
</feature>
<gene>
    <name type="primary">Disp1</name>
    <name type="synonym">Disp</name>
    <name type="synonym">Dispa</name>
    <name type="synonym">Icb</name>
    <name type="synonym">Icbins</name>
</gene>
<keyword id="KW-0002">3D-structure</keyword>
<keyword id="KW-0025">Alternative splicing</keyword>
<keyword id="KW-0217">Developmental protein</keyword>
<keyword id="KW-0325">Glycoprotein</keyword>
<keyword id="KW-0472">Membrane</keyword>
<keyword id="KW-1185">Reference proteome</keyword>
<keyword id="KW-0812">Transmembrane</keyword>
<keyword id="KW-1133">Transmembrane helix</keyword>
<organism>
    <name type="scientific">Mus musculus</name>
    <name type="common">Mouse</name>
    <dbReference type="NCBI Taxonomy" id="10090"/>
    <lineage>
        <taxon>Eukaryota</taxon>
        <taxon>Metazoa</taxon>
        <taxon>Chordata</taxon>
        <taxon>Craniata</taxon>
        <taxon>Vertebrata</taxon>
        <taxon>Euteleostomi</taxon>
        <taxon>Mammalia</taxon>
        <taxon>Eutheria</taxon>
        <taxon>Euarchontoglires</taxon>
        <taxon>Glires</taxon>
        <taxon>Rodentia</taxon>
        <taxon>Myomorpha</taxon>
        <taxon>Muroidea</taxon>
        <taxon>Muridae</taxon>
        <taxon>Murinae</taxon>
        <taxon>Mus</taxon>
        <taxon>Mus</taxon>
    </lineage>
</organism>
<evidence type="ECO:0000255" key="1"/>
<evidence type="ECO:0000255" key="2">
    <source>
        <dbReference type="PROSITE-ProRule" id="PRU00199"/>
    </source>
</evidence>
<evidence type="ECO:0000256" key="3">
    <source>
        <dbReference type="SAM" id="MobiDB-lite"/>
    </source>
</evidence>
<evidence type="ECO:0000269" key="4">
    <source>
    </source>
</evidence>
<evidence type="ECO:0000269" key="5">
    <source>
    </source>
</evidence>
<evidence type="ECO:0000269" key="6">
    <source>
    </source>
</evidence>
<evidence type="ECO:0000269" key="7">
    <source>
    </source>
</evidence>
<evidence type="ECO:0000303" key="8">
    <source>
    </source>
</evidence>
<evidence type="ECO:0000305" key="9"/>
<evidence type="ECO:0007829" key="10">
    <source>
        <dbReference type="PDB" id="7RPH"/>
    </source>
</evidence>
<evidence type="ECO:0007829" key="11">
    <source>
        <dbReference type="PDB" id="7RPI"/>
    </source>
</evidence>
<evidence type="ECO:0007829" key="12">
    <source>
        <dbReference type="PDB" id="7RPJ"/>
    </source>
</evidence>
<evidence type="ECO:0007829" key="13">
    <source>
        <dbReference type="PDB" id="7RPK"/>
    </source>
</evidence>
<accession>Q3TDN0</accession>
<accession>Q3UUL8</accession>
<accession>Q80ZZ8</accession>
<accession>Q8CGS3</accession>
<accession>Q8CIP6</accession>
<accession>Q8CIQ9</accession>
<accession>Q9CT62</accession>